<gene>
    <name type="primary">OPG075</name>
    <name type="ordered locus">CMP66L</name>
</gene>
<reference key="1">
    <citation type="journal article" date="2002" name="J. Gen. Virol.">
        <title>The sequence of camelpox virus shows it is most closely related to variola virus, the cause of smallpox.</title>
        <authorList>
            <person name="Gubser C."/>
            <person name="Smith G.L."/>
        </authorList>
    </citation>
    <scope>NUCLEOTIDE SEQUENCE [LARGE SCALE GENOMIC DNA]</scope>
</reference>
<accession>Q775X4</accession>
<evidence type="ECO:0000250" key="1"/>
<evidence type="ECO:0000250" key="2">
    <source>
        <dbReference type="UniProtKB" id="P68692"/>
    </source>
</evidence>
<evidence type="ECO:0000255" key="3">
    <source>
        <dbReference type="PROSITE-ProRule" id="PRU00686"/>
    </source>
</evidence>
<evidence type="ECO:0000305" key="4"/>
<organism>
    <name type="scientific">Camelpox virus (strain CMS)</name>
    <dbReference type="NCBI Taxonomy" id="203172"/>
    <lineage>
        <taxon>Viruses</taxon>
        <taxon>Varidnaviria</taxon>
        <taxon>Bamfordvirae</taxon>
        <taxon>Nucleocytoviricota</taxon>
        <taxon>Pokkesviricetes</taxon>
        <taxon>Chitovirales</taxon>
        <taxon>Poxviridae</taxon>
        <taxon>Chordopoxvirinae</taxon>
        <taxon>Orthopoxvirus</taxon>
        <taxon>Camelpox virus</taxon>
    </lineage>
</organism>
<organismHost>
    <name type="scientific">Camelus</name>
    <dbReference type="NCBI Taxonomy" id="9836"/>
</organismHost>
<proteinExistence type="inferred from homology"/>
<name>GLRX1_CAMPS</name>
<feature type="chain" id="PRO_0000141621" description="Glutaredoxin-1">
    <location>
        <begin position="1"/>
        <end position="108"/>
    </location>
</feature>
<feature type="domain" description="Glutaredoxin" evidence="3">
    <location>
        <begin position="3"/>
        <end position="106"/>
    </location>
</feature>
<feature type="disulfide bond" description="Redox-active" evidence="2">
    <location>
        <begin position="23"/>
        <end position="26"/>
    </location>
</feature>
<dbReference type="EMBL" id="AY009089">
    <property type="protein sequence ID" value="AAG37534.1"/>
    <property type="molecule type" value="Genomic_DNA"/>
</dbReference>
<dbReference type="SMR" id="Q775X4"/>
<dbReference type="Proteomes" id="UP000107153">
    <property type="component" value="Genome"/>
</dbReference>
<dbReference type="GO" id="GO:0044423">
    <property type="term" value="C:virion component"/>
    <property type="evidence" value="ECO:0007669"/>
    <property type="project" value="UniProtKB-KW"/>
</dbReference>
<dbReference type="GO" id="GO:0015038">
    <property type="term" value="F:glutathione disulfide oxidoreductase activity"/>
    <property type="evidence" value="ECO:0007669"/>
    <property type="project" value="TreeGrafter"/>
</dbReference>
<dbReference type="Gene3D" id="3.40.30.10">
    <property type="entry name" value="Glutaredoxin"/>
    <property type="match status" value="1"/>
</dbReference>
<dbReference type="InterPro" id="IPR011767">
    <property type="entry name" value="GLR_AS"/>
</dbReference>
<dbReference type="InterPro" id="IPR047185">
    <property type="entry name" value="GLRX1"/>
</dbReference>
<dbReference type="InterPro" id="IPR002109">
    <property type="entry name" value="Glutaredoxin"/>
</dbReference>
<dbReference type="InterPro" id="IPR011899">
    <property type="entry name" value="Glutaredoxin_euk/vir"/>
</dbReference>
<dbReference type="InterPro" id="IPR014025">
    <property type="entry name" value="Glutaredoxin_subgr"/>
</dbReference>
<dbReference type="InterPro" id="IPR036249">
    <property type="entry name" value="Thioredoxin-like_sf"/>
</dbReference>
<dbReference type="NCBIfam" id="TIGR02180">
    <property type="entry name" value="GRX_euk"/>
    <property type="match status" value="1"/>
</dbReference>
<dbReference type="PANTHER" id="PTHR46185">
    <property type="entry name" value="GLUTAREDOXIN-1"/>
    <property type="match status" value="1"/>
</dbReference>
<dbReference type="PANTHER" id="PTHR46185:SF1">
    <property type="entry name" value="GLUTAREDOXIN-1"/>
    <property type="match status" value="1"/>
</dbReference>
<dbReference type="Pfam" id="PF00462">
    <property type="entry name" value="Glutaredoxin"/>
    <property type="match status" value="1"/>
</dbReference>
<dbReference type="PRINTS" id="PR00160">
    <property type="entry name" value="GLUTAREDOXIN"/>
</dbReference>
<dbReference type="SUPFAM" id="SSF52833">
    <property type="entry name" value="Thioredoxin-like"/>
    <property type="match status" value="1"/>
</dbReference>
<dbReference type="PROSITE" id="PS00195">
    <property type="entry name" value="GLUTAREDOXIN_1"/>
    <property type="match status" value="1"/>
</dbReference>
<dbReference type="PROSITE" id="PS51354">
    <property type="entry name" value="GLUTAREDOXIN_2"/>
    <property type="match status" value="1"/>
</dbReference>
<keyword id="KW-1015">Disulfide bond</keyword>
<keyword id="KW-0249">Electron transport</keyword>
<keyword id="KW-0676">Redox-active center</keyword>
<keyword id="KW-1185">Reference proteome</keyword>
<keyword id="KW-0813">Transport</keyword>
<keyword id="KW-0946">Virion</keyword>
<sequence length="108" mass="12357">MAEEFVQQRLANNKVTIFVKFTCPFCRNALDILNKFSFKRGAYEIVDIKEFKPENELRDYFEQITGGRTVPRIFFGKTSIGGYSDMLEIDNMDALGDILSSIGVLRTC</sequence>
<protein>
    <recommendedName>
        <fullName>Glutaredoxin-1</fullName>
    </recommendedName>
</protein>
<comment type="function">
    <text evidence="1">Has thioltransferase and dehydroascorbate reductase activities.</text>
</comment>
<comment type="subcellular location">
    <subcellularLocation>
        <location>Virion</location>
    </subcellularLocation>
    <text evidence="1">Localizes to the virion core.</text>
</comment>
<comment type="induction">
    <text evidence="2">Expressed in the intermediate phase of the viral replicative cycle.</text>
</comment>
<comment type="similarity">
    <text evidence="4">Belongs to the glutaredoxin family.</text>
</comment>